<keyword id="KW-0067">ATP-binding</keyword>
<keyword id="KW-0963">Cytoplasm</keyword>
<keyword id="KW-0436">Ligase</keyword>
<keyword id="KW-0547">Nucleotide-binding</keyword>
<keyword id="KW-1185">Reference proteome</keyword>
<comment type="function">
    <text evidence="1">Catalyzes the conversion of 3'-phosphate to a 2',3'-cyclic phosphodiester at the end of RNA. The mechanism of action of the enzyme occurs in 3 steps: (A) adenylation of the enzyme by ATP; (B) transfer of adenylate to an RNA-N3'P to produce RNA-N3'PP5'A; (C) and attack of the adjacent 2'-hydroxyl on the 3'-phosphorus in the diester linkage to produce the cyclic end product. The biological role of this enzyme is unknown but it is likely to function in some aspects of cellular RNA processing.</text>
</comment>
<comment type="catalytic activity">
    <reaction evidence="1">
        <text>a 3'-end 3'-phospho-ribonucleotide-RNA + ATP = a 3'-end 2',3'-cyclophospho-ribonucleotide-RNA + AMP + diphosphate</text>
        <dbReference type="Rhea" id="RHEA:23976"/>
        <dbReference type="Rhea" id="RHEA-COMP:10463"/>
        <dbReference type="Rhea" id="RHEA-COMP:10464"/>
        <dbReference type="ChEBI" id="CHEBI:30616"/>
        <dbReference type="ChEBI" id="CHEBI:33019"/>
        <dbReference type="ChEBI" id="CHEBI:83062"/>
        <dbReference type="ChEBI" id="CHEBI:83064"/>
        <dbReference type="ChEBI" id="CHEBI:456215"/>
        <dbReference type="EC" id="6.5.1.4"/>
    </reaction>
</comment>
<comment type="subcellular location">
    <subcellularLocation>
        <location evidence="1">Cytoplasm</location>
    </subcellularLocation>
</comment>
<comment type="similarity">
    <text evidence="1">Belongs to the RNA 3'-terminal cyclase family. Type 1 subfamily.</text>
</comment>
<dbReference type="EC" id="6.5.1.4" evidence="1"/>
<dbReference type="EMBL" id="CP000360">
    <property type="protein sequence ID" value="ABF40274.1"/>
    <property type="molecule type" value="Genomic_DNA"/>
</dbReference>
<dbReference type="SMR" id="Q1IS76"/>
<dbReference type="STRING" id="204669.Acid345_1272"/>
<dbReference type="EnsemblBacteria" id="ABF40274">
    <property type="protein sequence ID" value="ABF40274"/>
    <property type="gene ID" value="Acid345_1272"/>
</dbReference>
<dbReference type="KEGG" id="aba:Acid345_1272"/>
<dbReference type="eggNOG" id="COG0430">
    <property type="taxonomic scope" value="Bacteria"/>
</dbReference>
<dbReference type="HOGENOM" id="CLU_027882_0_0_0"/>
<dbReference type="OrthoDB" id="9789235at2"/>
<dbReference type="Proteomes" id="UP000002432">
    <property type="component" value="Chromosome"/>
</dbReference>
<dbReference type="GO" id="GO:0005737">
    <property type="term" value="C:cytoplasm"/>
    <property type="evidence" value="ECO:0007669"/>
    <property type="project" value="UniProtKB-SubCell"/>
</dbReference>
<dbReference type="GO" id="GO:0005524">
    <property type="term" value="F:ATP binding"/>
    <property type="evidence" value="ECO:0007669"/>
    <property type="project" value="UniProtKB-KW"/>
</dbReference>
<dbReference type="GO" id="GO:0003963">
    <property type="term" value="F:RNA-3'-phosphate cyclase activity"/>
    <property type="evidence" value="ECO:0007669"/>
    <property type="project" value="UniProtKB-UniRule"/>
</dbReference>
<dbReference type="GO" id="GO:0006396">
    <property type="term" value="P:RNA processing"/>
    <property type="evidence" value="ECO:0007669"/>
    <property type="project" value="InterPro"/>
</dbReference>
<dbReference type="Gene3D" id="3.65.10.20">
    <property type="entry name" value="RNA 3'-terminal phosphate cyclase domain"/>
    <property type="match status" value="1"/>
</dbReference>
<dbReference type="Gene3D" id="3.30.360.20">
    <property type="entry name" value="RNA 3'-terminal phosphate cyclase, insert domain"/>
    <property type="match status" value="1"/>
</dbReference>
<dbReference type="HAMAP" id="MF_00200">
    <property type="entry name" value="RTC"/>
    <property type="match status" value="1"/>
</dbReference>
<dbReference type="InterPro" id="IPR013791">
    <property type="entry name" value="RNA3'-term_phos_cycl_insert"/>
</dbReference>
<dbReference type="InterPro" id="IPR023797">
    <property type="entry name" value="RNA3'_phos_cyclase_dom"/>
</dbReference>
<dbReference type="InterPro" id="IPR037136">
    <property type="entry name" value="RNA3'_phos_cyclase_dom_sf"/>
</dbReference>
<dbReference type="InterPro" id="IPR000228">
    <property type="entry name" value="RNA3'_term_phos_cyc"/>
</dbReference>
<dbReference type="InterPro" id="IPR017770">
    <property type="entry name" value="RNA3'_term_phos_cyc_type_1"/>
</dbReference>
<dbReference type="InterPro" id="IPR013792">
    <property type="entry name" value="RNA3'P_cycl/enolpyr_Trfase_a/b"/>
</dbReference>
<dbReference type="InterPro" id="IPR036553">
    <property type="entry name" value="RPTC_insert"/>
</dbReference>
<dbReference type="NCBIfam" id="NF003246">
    <property type="entry name" value="PRK04204.1-2"/>
    <property type="match status" value="1"/>
</dbReference>
<dbReference type="NCBIfam" id="NF003247">
    <property type="entry name" value="PRK04204.1-3"/>
    <property type="match status" value="1"/>
</dbReference>
<dbReference type="NCBIfam" id="TIGR03399">
    <property type="entry name" value="RNA_3prim_cycl"/>
    <property type="match status" value="1"/>
</dbReference>
<dbReference type="PANTHER" id="PTHR11096">
    <property type="entry name" value="RNA 3' TERMINAL PHOSPHATE CYCLASE"/>
    <property type="match status" value="1"/>
</dbReference>
<dbReference type="PANTHER" id="PTHR11096:SF0">
    <property type="entry name" value="RNA 3'-TERMINAL PHOSPHATE CYCLASE"/>
    <property type="match status" value="1"/>
</dbReference>
<dbReference type="Pfam" id="PF01137">
    <property type="entry name" value="RTC"/>
    <property type="match status" value="1"/>
</dbReference>
<dbReference type="Pfam" id="PF05189">
    <property type="entry name" value="RTC_insert"/>
    <property type="match status" value="1"/>
</dbReference>
<dbReference type="PIRSF" id="PIRSF005378">
    <property type="entry name" value="RNA3'_term_phos_cycl_euk"/>
    <property type="match status" value="1"/>
</dbReference>
<dbReference type="SUPFAM" id="SSF55205">
    <property type="entry name" value="EPT/RTPC-like"/>
    <property type="match status" value="2"/>
</dbReference>
<dbReference type="SUPFAM" id="SSF52913">
    <property type="entry name" value="RNA 3'-terminal phosphate cyclase, RPTC, insert domain"/>
    <property type="match status" value="1"/>
</dbReference>
<feature type="chain" id="PRO_0000264792" description="RNA 3'-terminal phosphate cyclase">
    <location>
        <begin position="1"/>
        <end position="355"/>
    </location>
</feature>
<feature type="active site" description="Tele-AMP-histidine intermediate" evidence="1">
    <location>
        <position position="316"/>
    </location>
</feature>
<feature type="binding site" evidence="1">
    <location>
        <position position="109"/>
    </location>
    <ligand>
        <name>ATP</name>
        <dbReference type="ChEBI" id="CHEBI:30616"/>
    </ligand>
</feature>
<feature type="binding site" evidence="1">
    <location>
        <begin position="291"/>
        <end position="295"/>
    </location>
    <ligand>
        <name>ATP</name>
        <dbReference type="ChEBI" id="CHEBI:30616"/>
    </ligand>
</feature>
<protein>
    <recommendedName>
        <fullName evidence="1">RNA 3'-terminal phosphate cyclase</fullName>
        <shortName evidence="1">RNA cyclase</shortName>
        <shortName evidence="1">RNA-3'-phosphate cyclase</shortName>
        <ecNumber evidence="1">6.5.1.4</ecNumber>
    </recommendedName>
</protein>
<accession>Q1IS76</accession>
<gene>
    <name evidence="1" type="primary">rtcA</name>
    <name type="ordered locus">Acid345_1272</name>
</gene>
<organism>
    <name type="scientific">Koribacter versatilis (strain Ellin345)</name>
    <dbReference type="NCBI Taxonomy" id="204669"/>
    <lineage>
        <taxon>Bacteria</taxon>
        <taxon>Pseudomonadati</taxon>
        <taxon>Acidobacteriota</taxon>
        <taxon>Terriglobia</taxon>
        <taxon>Terriglobales</taxon>
        <taxon>Candidatus Korobacteraceae</taxon>
        <taxon>Candidatus Korobacter</taxon>
    </lineage>
</organism>
<sequence length="355" mass="37475">MRCGPKGLNMIVIDGSQGEGGGQILRTALSLSMVTGQPFTIEKIRANRERGGLLRQHLTAVLAAAEISGANVTGAELGSRTLTFAPQRVTPGDYSFAVGTAGSATLVLQTLLPALMLANKPSNVVVEGGTHNMAAPPFDFLAKTFAPIIESMGPKLKLTLDRYGFYPAGGGKITAEIEPVEKLKQLELLDRGEVLQQNAVALLAHLPRHIADRELETASNILGLAPESTRILGTKNSAGPGNALMIEVQTERHTEIFTAFGKVGISAEKVAEEAAVAAAQYVASSAFACEHLADQLLLPIALAGGGSFTAVRQTMHARTNIEIIRLFLPVSFEISEEENCARVALSTRDRAGVSA</sequence>
<name>RTCA_KORVE</name>
<reference key="1">
    <citation type="journal article" date="2009" name="Appl. Environ. Microbiol.">
        <title>Three genomes from the phylum Acidobacteria provide insight into the lifestyles of these microorganisms in soils.</title>
        <authorList>
            <person name="Ward N.L."/>
            <person name="Challacombe J.F."/>
            <person name="Janssen P.H."/>
            <person name="Henrissat B."/>
            <person name="Coutinho P.M."/>
            <person name="Wu M."/>
            <person name="Xie G."/>
            <person name="Haft D.H."/>
            <person name="Sait M."/>
            <person name="Badger J."/>
            <person name="Barabote R.D."/>
            <person name="Bradley B."/>
            <person name="Brettin T.S."/>
            <person name="Brinkac L.M."/>
            <person name="Bruce D."/>
            <person name="Creasy T."/>
            <person name="Daugherty S.C."/>
            <person name="Davidsen T.M."/>
            <person name="DeBoy R.T."/>
            <person name="Detter J.C."/>
            <person name="Dodson R.J."/>
            <person name="Durkin A.S."/>
            <person name="Ganapathy A."/>
            <person name="Gwinn-Giglio M."/>
            <person name="Han C.S."/>
            <person name="Khouri H."/>
            <person name="Kiss H."/>
            <person name="Kothari S.P."/>
            <person name="Madupu R."/>
            <person name="Nelson K.E."/>
            <person name="Nelson W.C."/>
            <person name="Paulsen I."/>
            <person name="Penn K."/>
            <person name="Ren Q."/>
            <person name="Rosovitz M.J."/>
            <person name="Selengut J.D."/>
            <person name="Shrivastava S."/>
            <person name="Sullivan S.A."/>
            <person name="Tapia R."/>
            <person name="Thompson L.S."/>
            <person name="Watkins K.L."/>
            <person name="Yang Q."/>
            <person name="Yu C."/>
            <person name="Zafar N."/>
            <person name="Zhou L."/>
            <person name="Kuske C.R."/>
        </authorList>
    </citation>
    <scope>NUCLEOTIDE SEQUENCE [LARGE SCALE GENOMIC DNA]</scope>
    <source>
        <strain>Ellin345</strain>
    </source>
</reference>
<evidence type="ECO:0000255" key="1">
    <source>
        <dbReference type="HAMAP-Rule" id="MF_00200"/>
    </source>
</evidence>
<proteinExistence type="inferred from homology"/>